<feature type="chain" id="PRO_1000099858" description="Anthranilate phosphoribosyltransferase">
    <location>
        <begin position="1"/>
        <end position="344"/>
    </location>
</feature>
<feature type="binding site" evidence="1">
    <location>
        <position position="81"/>
    </location>
    <ligand>
        <name>5-phospho-alpha-D-ribose 1-diphosphate</name>
        <dbReference type="ChEBI" id="CHEBI:58017"/>
    </ligand>
</feature>
<feature type="binding site" evidence="1">
    <location>
        <position position="81"/>
    </location>
    <ligand>
        <name>anthranilate</name>
        <dbReference type="ChEBI" id="CHEBI:16567"/>
        <label>1</label>
    </ligand>
</feature>
<feature type="binding site" evidence="1">
    <location>
        <begin position="84"/>
        <end position="85"/>
    </location>
    <ligand>
        <name>5-phospho-alpha-D-ribose 1-diphosphate</name>
        <dbReference type="ChEBI" id="CHEBI:58017"/>
    </ligand>
</feature>
<feature type="binding site" evidence="1">
    <location>
        <position position="89"/>
    </location>
    <ligand>
        <name>5-phospho-alpha-D-ribose 1-diphosphate</name>
        <dbReference type="ChEBI" id="CHEBI:58017"/>
    </ligand>
</feature>
<feature type="binding site" evidence="1">
    <location>
        <begin position="91"/>
        <end position="94"/>
    </location>
    <ligand>
        <name>5-phospho-alpha-D-ribose 1-diphosphate</name>
        <dbReference type="ChEBI" id="CHEBI:58017"/>
    </ligand>
</feature>
<feature type="binding site" evidence="1">
    <location>
        <position position="93"/>
    </location>
    <ligand>
        <name>Mg(2+)</name>
        <dbReference type="ChEBI" id="CHEBI:18420"/>
        <label>1</label>
    </ligand>
</feature>
<feature type="binding site" evidence="1">
    <location>
        <begin position="109"/>
        <end position="117"/>
    </location>
    <ligand>
        <name>5-phospho-alpha-D-ribose 1-diphosphate</name>
        <dbReference type="ChEBI" id="CHEBI:58017"/>
    </ligand>
</feature>
<feature type="binding site" evidence="1">
    <location>
        <position position="112"/>
    </location>
    <ligand>
        <name>anthranilate</name>
        <dbReference type="ChEBI" id="CHEBI:16567"/>
        <label>1</label>
    </ligand>
</feature>
<feature type="binding site" evidence="1">
    <location>
        <position position="121"/>
    </location>
    <ligand>
        <name>5-phospho-alpha-D-ribose 1-diphosphate</name>
        <dbReference type="ChEBI" id="CHEBI:58017"/>
    </ligand>
</feature>
<feature type="binding site" evidence="1">
    <location>
        <position position="167"/>
    </location>
    <ligand>
        <name>anthranilate</name>
        <dbReference type="ChEBI" id="CHEBI:16567"/>
        <label>2</label>
    </ligand>
</feature>
<feature type="binding site" evidence="1">
    <location>
        <position position="226"/>
    </location>
    <ligand>
        <name>Mg(2+)</name>
        <dbReference type="ChEBI" id="CHEBI:18420"/>
        <label>2</label>
    </ligand>
</feature>
<feature type="binding site" evidence="1">
    <location>
        <position position="227"/>
    </location>
    <ligand>
        <name>Mg(2+)</name>
        <dbReference type="ChEBI" id="CHEBI:18420"/>
        <label>1</label>
    </ligand>
</feature>
<feature type="binding site" evidence="1">
    <location>
        <position position="227"/>
    </location>
    <ligand>
        <name>Mg(2+)</name>
        <dbReference type="ChEBI" id="CHEBI:18420"/>
        <label>2</label>
    </ligand>
</feature>
<comment type="function">
    <text evidence="1">Catalyzes the transfer of the phosphoribosyl group of 5-phosphorylribose-1-pyrophosphate (PRPP) to anthranilate to yield N-(5'-phosphoribosyl)-anthranilate (PRA).</text>
</comment>
<comment type="catalytic activity">
    <reaction evidence="1">
        <text>N-(5-phospho-beta-D-ribosyl)anthranilate + diphosphate = 5-phospho-alpha-D-ribose 1-diphosphate + anthranilate</text>
        <dbReference type="Rhea" id="RHEA:11768"/>
        <dbReference type="ChEBI" id="CHEBI:16567"/>
        <dbReference type="ChEBI" id="CHEBI:18277"/>
        <dbReference type="ChEBI" id="CHEBI:33019"/>
        <dbReference type="ChEBI" id="CHEBI:58017"/>
        <dbReference type="EC" id="2.4.2.18"/>
    </reaction>
</comment>
<comment type="cofactor">
    <cofactor evidence="1">
        <name>Mg(2+)</name>
        <dbReference type="ChEBI" id="CHEBI:18420"/>
    </cofactor>
    <text evidence="1">Binds 2 magnesium ions per monomer.</text>
</comment>
<comment type="pathway">
    <text evidence="1">Amino-acid biosynthesis; L-tryptophan biosynthesis; L-tryptophan from chorismate: step 2/5.</text>
</comment>
<comment type="subunit">
    <text evidence="1">Homodimer.</text>
</comment>
<comment type="similarity">
    <text evidence="1">Belongs to the anthranilate phosphoribosyltransferase family.</text>
</comment>
<sequence>MNEFKPLLGKVATGASLTRDEAAYVFDKMMSGEATPSQMGALLMGLRVRGETVEEIAGAVSVMRSKMLSVEAPSEAVDVVGTGGDASGSYNISTCASFIVAGAGVPVAKHGNRALSSKSGAADVLAALGVRIDLDPAGISRCIAEAGIGFMFAPSHHPAMKHVGPTRVEMGTRTIFNLLGPLSNPAGVTRQMVGVFAKSWIVPLAEVLRTLGSQKAFVVHGSDGLDEITISGGTDIAVLDEGRIHTFTIMPEDVGLKRHPAEDLKGGDAVHNAKALRTVLDGAEGAYRDVSLFNAAAALVVAGRAKDLKEGVEMARVSLDTGSARARLEHLVAVSEKLAPEAAQ</sequence>
<accession>A7INK3</accession>
<reference key="1">
    <citation type="submission" date="2007-07" db="EMBL/GenBank/DDBJ databases">
        <title>Complete sequence of chromosome of Xanthobacter autotrophicus Py2.</title>
        <authorList>
            <consortium name="US DOE Joint Genome Institute"/>
            <person name="Copeland A."/>
            <person name="Lucas S."/>
            <person name="Lapidus A."/>
            <person name="Barry K."/>
            <person name="Glavina del Rio T."/>
            <person name="Hammon N."/>
            <person name="Israni S."/>
            <person name="Dalin E."/>
            <person name="Tice H."/>
            <person name="Pitluck S."/>
            <person name="Sims D."/>
            <person name="Brettin T."/>
            <person name="Bruce D."/>
            <person name="Detter J.C."/>
            <person name="Han C."/>
            <person name="Tapia R."/>
            <person name="Brainard J."/>
            <person name="Schmutz J."/>
            <person name="Larimer F."/>
            <person name="Land M."/>
            <person name="Hauser L."/>
            <person name="Kyrpides N."/>
            <person name="Kim E."/>
            <person name="Ensigns S.A."/>
            <person name="Richardson P."/>
        </authorList>
    </citation>
    <scope>NUCLEOTIDE SEQUENCE [LARGE SCALE GENOMIC DNA]</scope>
    <source>
        <strain>ATCC BAA-1158 / Py2</strain>
    </source>
</reference>
<proteinExistence type="inferred from homology"/>
<protein>
    <recommendedName>
        <fullName evidence="1">Anthranilate phosphoribosyltransferase</fullName>
        <ecNumber evidence="1">2.4.2.18</ecNumber>
    </recommendedName>
</protein>
<evidence type="ECO:0000255" key="1">
    <source>
        <dbReference type="HAMAP-Rule" id="MF_00211"/>
    </source>
</evidence>
<name>TRPD_XANP2</name>
<keyword id="KW-0028">Amino-acid biosynthesis</keyword>
<keyword id="KW-0057">Aromatic amino acid biosynthesis</keyword>
<keyword id="KW-0328">Glycosyltransferase</keyword>
<keyword id="KW-0460">Magnesium</keyword>
<keyword id="KW-0479">Metal-binding</keyword>
<keyword id="KW-1185">Reference proteome</keyword>
<keyword id="KW-0808">Transferase</keyword>
<keyword id="KW-0822">Tryptophan biosynthesis</keyword>
<organism>
    <name type="scientific">Xanthobacter autotrophicus (strain ATCC BAA-1158 / Py2)</name>
    <dbReference type="NCBI Taxonomy" id="78245"/>
    <lineage>
        <taxon>Bacteria</taxon>
        <taxon>Pseudomonadati</taxon>
        <taxon>Pseudomonadota</taxon>
        <taxon>Alphaproteobacteria</taxon>
        <taxon>Hyphomicrobiales</taxon>
        <taxon>Xanthobacteraceae</taxon>
        <taxon>Xanthobacter</taxon>
    </lineage>
</organism>
<gene>
    <name evidence="1" type="primary">trpD</name>
    <name type="ordered locus">Xaut_4376</name>
</gene>
<dbReference type="EC" id="2.4.2.18" evidence="1"/>
<dbReference type="EMBL" id="CP000781">
    <property type="protein sequence ID" value="ABS69597.1"/>
    <property type="molecule type" value="Genomic_DNA"/>
</dbReference>
<dbReference type="SMR" id="A7INK3"/>
<dbReference type="STRING" id="78245.Xaut_4376"/>
<dbReference type="KEGG" id="xau:Xaut_4376"/>
<dbReference type="eggNOG" id="COG0547">
    <property type="taxonomic scope" value="Bacteria"/>
</dbReference>
<dbReference type="HOGENOM" id="CLU_034315_2_1_5"/>
<dbReference type="OrthoDB" id="9806430at2"/>
<dbReference type="PhylomeDB" id="A7INK3"/>
<dbReference type="UniPathway" id="UPA00035">
    <property type="reaction ID" value="UER00041"/>
</dbReference>
<dbReference type="Proteomes" id="UP000002417">
    <property type="component" value="Chromosome"/>
</dbReference>
<dbReference type="GO" id="GO:0005829">
    <property type="term" value="C:cytosol"/>
    <property type="evidence" value="ECO:0007669"/>
    <property type="project" value="TreeGrafter"/>
</dbReference>
<dbReference type="GO" id="GO:0004048">
    <property type="term" value="F:anthranilate phosphoribosyltransferase activity"/>
    <property type="evidence" value="ECO:0007669"/>
    <property type="project" value="UniProtKB-UniRule"/>
</dbReference>
<dbReference type="GO" id="GO:0000287">
    <property type="term" value="F:magnesium ion binding"/>
    <property type="evidence" value="ECO:0007669"/>
    <property type="project" value="UniProtKB-UniRule"/>
</dbReference>
<dbReference type="GO" id="GO:0000162">
    <property type="term" value="P:L-tryptophan biosynthetic process"/>
    <property type="evidence" value="ECO:0007669"/>
    <property type="project" value="UniProtKB-UniRule"/>
</dbReference>
<dbReference type="FunFam" id="3.40.1030.10:FF:000002">
    <property type="entry name" value="Anthranilate phosphoribosyltransferase"/>
    <property type="match status" value="1"/>
</dbReference>
<dbReference type="Gene3D" id="3.40.1030.10">
    <property type="entry name" value="Nucleoside phosphorylase/phosphoribosyltransferase catalytic domain"/>
    <property type="match status" value="1"/>
</dbReference>
<dbReference type="Gene3D" id="1.20.970.10">
    <property type="entry name" value="Transferase, Pyrimidine Nucleoside Phosphorylase, Chain C"/>
    <property type="match status" value="1"/>
</dbReference>
<dbReference type="HAMAP" id="MF_00211">
    <property type="entry name" value="TrpD"/>
    <property type="match status" value="1"/>
</dbReference>
<dbReference type="InterPro" id="IPR005940">
    <property type="entry name" value="Anthranilate_Pribosyl_Tfrase"/>
</dbReference>
<dbReference type="InterPro" id="IPR000312">
    <property type="entry name" value="Glycosyl_Trfase_fam3"/>
</dbReference>
<dbReference type="InterPro" id="IPR017459">
    <property type="entry name" value="Glycosyl_Trfase_fam3_N_dom"/>
</dbReference>
<dbReference type="InterPro" id="IPR036320">
    <property type="entry name" value="Glycosyl_Trfase_fam3_N_dom_sf"/>
</dbReference>
<dbReference type="InterPro" id="IPR035902">
    <property type="entry name" value="Nuc_phospho_transferase"/>
</dbReference>
<dbReference type="NCBIfam" id="TIGR01245">
    <property type="entry name" value="trpD"/>
    <property type="match status" value="1"/>
</dbReference>
<dbReference type="PANTHER" id="PTHR43285">
    <property type="entry name" value="ANTHRANILATE PHOSPHORIBOSYLTRANSFERASE"/>
    <property type="match status" value="1"/>
</dbReference>
<dbReference type="PANTHER" id="PTHR43285:SF2">
    <property type="entry name" value="ANTHRANILATE PHOSPHORIBOSYLTRANSFERASE"/>
    <property type="match status" value="1"/>
</dbReference>
<dbReference type="Pfam" id="PF02885">
    <property type="entry name" value="Glycos_trans_3N"/>
    <property type="match status" value="1"/>
</dbReference>
<dbReference type="Pfam" id="PF00591">
    <property type="entry name" value="Glycos_transf_3"/>
    <property type="match status" value="1"/>
</dbReference>
<dbReference type="SUPFAM" id="SSF52418">
    <property type="entry name" value="Nucleoside phosphorylase/phosphoribosyltransferase catalytic domain"/>
    <property type="match status" value="1"/>
</dbReference>
<dbReference type="SUPFAM" id="SSF47648">
    <property type="entry name" value="Nucleoside phosphorylase/phosphoribosyltransferase N-terminal domain"/>
    <property type="match status" value="1"/>
</dbReference>